<protein>
    <recommendedName>
        <fullName>Thioredoxin-related transmembrane protein 2</fullName>
    </recommendedName>
    <alternativeName>
        <fullName>Thioredoxin domain-containing protein 14</fullName>
    </alternativeName>
</protein>
<organism>
    <name type="scientific">Rattus norvegicus</name>
    <name type="common">Rat</name>
    <dbReference type="NCBI Taxonomy" id="10116"/>
    <lineage>
        <taxon>Eukaryota</taxon>
        <taxon>Metazoa</taxon>
        <taxon>Chordata</taxon>
        <taxon>Craniata</taxon>
        <taxon>Vertebrata</taxon>
        <taxon>Euteleostomi</taxon>
        <taxon>Mammalia</taxon>
        <taxon>Eutheria</taxon>
        <taxon>Euarchontoglires</taxon>
        <taxon>Glires</taxon>
        <taxon>Rodentia</taxon>
        <taxon>Myomorpha</taxon>
        <taxon>Muroidea</taxon>
        <taxon>Muridae</taxon>
        <taxon>Murinae</taxon>
        <taxon>Rattus</taxon>
    </lineage>
</organism>
<evidence type="ECO:0000250" key="1">
    <source>
        <dbReference type="UniProtKB" id="Q9Y320"/>
    </source>
</evidence>
<evidence type="ECO:0000255" key="2"/>
<evidence type="ECO:0000255" key="3">
    <source>
        <dbReference type="PROSITE-ProRule" id="PRU00691"/>
    </source>
</evidence>
<evidence type="ECO:0000256" key="4">
    <source>
        <dbReference type="SAM" id="MobiDB-lite"/>
    </source>
</evidence>
<evidence type="ECO:0000305" key="5"/>
<gene>
    <name type="primary">Tmx2</name>
    <name type="synonym">Txndc14</name>
</gene>
<reference key="1">
    <citation type="journal article" date="2004" name="Genome Res.">
        <title>The status, quality, and expansion of the NIH full-length cDNA project: the Mammalian Gene Collection (MGC).</title>
        <authorList>
            <consortium name="The MGC Project Team"/>
        </authorList>
    </citation>
    <scope>NUCLEOTIDE SEQUENCE [LARGE SCALE MRNA]</scope>
    <source>
        <tissue>Testis</tissue>
    </source>
</reference>
<accession>Q5XIK2</accession>
<comment type="function">
    <text evidence="1">Endoplasmic reticulum and mitochondria-associated protein that probably functions as a regulator of cellular redox state and thereby regulates protein post-translational modification, protein folding and mitochondrial activity. Indirectly regulates neuronal proliferation, migration, and organization in the developing brain.</text>
</comment>
<comment type="subunit">
    <text evidence="1">Monomer (By similarity). Homodimer; disulfide-linked (By similarity). Occurs in both reduced and oxidized monomeric form (By similarity). Oxidative conditions increase homodimerization (By similarity). Interacts with CANX (By similarity). Interacts with ATP2A2 (By similarity).</text>
</comment>
<comment type="subcellular location">
    <subcellularLocation>
        <location evidence="1">Endoplasmic reticulum membrane</location>
        <topology evidence="2">Single-pass type I membrane protein</topology>
    </subcellularLocation>
    <subcellularLocation>
        <location evidence="1">Mitochondrion membrane</location>
        <topology evidence="2">Single-pass type I membrane protein</topology>
    </subcellularLocation>
    <text evidence="1">Localizes to endoplasmic reticulum mitochondria-associated membrane (MAMs) that connect the endoplasmic reticulum and the mitochondria.</text>
</comment>
<comment type="domain">
    <text evidence="5">The thioredoxin domain lacks the 2 redox-active cysteines, suggesting that it lacks thioredoxin activity.</text>
</comment>
<comment type="domain">
    <text evidence="5">The di-lysine motif confers endoplasmic reticulum localization for type I membrane proteins.</text>
</comment>
<sequence>MAVLAPLIALVYSVPRLSRWLARPYCLLSALLSIAFLLVRKLPPICNGLPTQREDGNPCDFDWREVEILMFLSAIVMMKNRRSITVEQHVGNIFMFSKVANAILFFRLDIRMGLLYLTLCIVFLMTCKPPLYMGPEYIKYFNDKTIDEELERDKRVTWIVEFFANWSNDCQSFAPIYADLSLKYNCSGLNFGKVDVGRYTDVSTRYKVSTSPLTKQLPTLILFQGGKEVMRRPQIDKKGRAVSWTFSEENVIREFNLNELYQRAKKLSKGGDMSEEKPGNPTPTAVPDGENKKDK</sequence>
<keyword id="KW-1015">Disulfide bond</keyword>
<keyword id="KW-0256">Endoplasmic reticulum</keyword>
<keyword id="KW-0472">Membrane</keyword>
<keyword id="KW-0496">Mitochondrion</keyword>
<keyword id="KW-0597">Phosphoprotein</keyword>
<keyword id="KW-1185">Reference proteome</keyword>
<keyword id="KW-0732">Signal</keyword>
<keyword id="KW-0812">Transmembrane</keyword>
<keyword id="KW-1133">Transmembrane helix</keyword>
<dbReference type="EMBL" id="BC083678">
    <property type="protein sequence ID" value="AAH83678.1"/>
    <property type="molecule type" value="mRNA"/>
</dbReference>
<dbReference type="RefSeq" id="NP_001007644.1">
    <property type="nucleotide sequence ID" value="NM_001007643.1"/>
</dbReference>
<dbReference type="BMRB" id="Q5XIK2"/>
<dbReference type="SMR" id="Q5XIK2"/>
<dbReference type="FunCoup" id="Q5XIK2">
    <property type="interactions" value="1822"/>
</dbReference>
<dbReference type="STRING" id="10116.ENSRNOP00000007914"/>
<dbReference type="PhosphoSitePlus" id="Q5XIK2"/>
<dbReference type="SwissPalm" id="Q5XIK2"/>
<dbReference type="jPOST" id="Q5XIK2"/>
<dbReference type="PaxDb" id="10116-ENSRNOP00000007914"/>
<dbReference type="Ensembl" id="ENSRNOT00000007914.5">
    <property type="protein sequence ID" value="ENSRNOP00000007914.3"/>
    <property type="gene ID" value="ENSRNOG00000005308.5"/>
</dbReference>
<dbReference type="GeneID" id="295701"/>
<dbReference type="KEGG" id="rno:295701"/>
<dbReference type="UCSC" id="RGD:1359456">
    <property type="organism name" value="rat"/>
</dbReference>
<dbReference type="AGR" id="RGD:1359456"/>
<dbReference type="CTD" id="51075"/>
<dbReference type="RGD" id="1359456">
    <property type="gene designation" value="Tmx2"/>
</dbReference>
<dbReference type="eggNOG" id="KOG0914">
    <property type="taxonomic scope" value="Eukaryota"/>
</dbReference>
<dbReference type="GeneTree" id="ENSGT00390000003751"/>
<dbReference type="HOGENOM" id="CLU_064868_0_0_1"/>
<dbReference type="InParanoid" id="Q5XIK2"/>
<dbReference type="OMA" id="TWIIEFF"/>
<dbReference type="OrthoDB" id="20229at2759"/>
<dbReference type="PhylomeDB" id="Q5XIK2"/>
<dbReference type="TreeFam" id="TF314606"/>
<dbReference type="PRO" id="PR:Q5XIK2"/>
<dbReference type="Proteomes" id="UP000002494">
    <property type="component" value="Chromosome 3"/>
</dbReference>
<dbReference type="Bgee" id="ENSRNOG00000005308">
    <property type="expression patterns" value="Expressed in cerebellum and 18 other cell types or tissues"/>
</dbReference>
<dbReference type="GO" id="GO:0005789">
    <property type="term" value="C:endoplasmic reticulum membrane"/>
    <property type="evidence" value="ECO:0000266"/>
    <property type="project" value="RGD"/>
</dbReference>
<dbReference type="GO" id="GO:0044233">
    <property type="term" value="C:mitochondria-associated endoplasmic reticulum membrane contact site"/>
    <property type="evidence" value="ECO:0000250"/>
    <property type="project" value="UniProtKB"/>
</dbReference>
<dbReference type="GO" id="GO:0031966">
    <property type="term" value="C:mitochondrial membrane"/>
    <property type="evidence" value="ECO:0007669"/>
    <property type="project" value="UniProtKB-SubCell"/>
</dbReference>
<dbReference type="GO" id="GO:0005739">
    <property type="term" value="C:mitochondrion"/>
    <property type="evidence" value="ECO:0000266"/>
    <property type="project" value="RGD"/>
</dbReference>
<dbReference type="GO" id="GO:0015036">
    <property type="term" value="F:disulfide oxidoreductase activity"/>
    <property type="evidence" value="ECO:0000250"/>
    <property type="project" value="UniProtKB"/>
</dbReference>
<dbReference type="GO" id="GO:0042802">
    <property type="term" value="F:identical protein binding"/>
    <property type="evidence" value="ECO:0000266"/>
    <property type="project" value="RGD"/>
</dbReference>
<dbReference type="GO" id="GO:0007420">
    <property type="term" value="P:brain development"/>
    <property type="evidence" value="ECO:0000250"/>
    <property type="project" value="UniProtKB"/>
</dbReference>
<dbReference type="CDD" id="cd02962">
    <property type="entry name" value="TMX2"/>
    <property type="match status" value="1"/>
</dbReference>
<dbReference type="Gene3D" id="3.40.30.10">
    <property type="entry name" value="Glutaredoxin"/>
    <property type="match status" value="1"/>
</dbReference>
<dbReference type="InterPro" id="IPR036249">
    <property type="entry name" value="Thioredoxin-like_sf"/>
</dbReference>
<dbReference type="InterPro" id="IPR013766">
    <property type="entry name" value="Thioredoxin_domain"/>
</dbReference>
<dbReference type="InterPro" id="IPR039101">
    <property type="entry name" value="TMX2"/>
</dbReference>
<dbReference type="InterPro" id="IPR037463">
    <property type="entry name" value="TMX2_thioredoxin_dom"/>
</dbReference>
<dbReference type="PANTHER" id="PTHR15853">
    <property type="entry name" value="THIOREDOXIN-RELATED"/>
    <property type="match status" value="1"/>
</dbReference>
<dbReference type="PANTHER" id="PTHR15853:SF0">
    <property type="entry name" value="THIOREDOXIN-RELATED TRANSMEMBRANE PROTEIN 2"/>
    <property type="match status" value="1"/>
</dbReference>
<dbReference type="Pfam" id="PF00085">
    <property type="entry name" value="Thioredoxin"/>
    <property type="match status" value="1"/>
</dbReference>
<dbReference type="SUPFAM" id="SSF52833">
    <property type="entry name" value="Thioredoxin-like"/>
    <property type="match status" value="1"/>
</dbReference>
<dbReference type="PROSITE" id="PS51352">
    <property type="entry name" value="THIOREDOXIN_2"/>
    <property type="match status" value="1"/>
</dbReference>
<feature type="signal peptide" evidence="2">
    <location>
        <begin position="1"/>
        <end position="48"/>
    </location>
</feature>
<feature type="chain" id="PRO_0000315756" description="Thioredoxin-related transmembrane protein 2">
    <location>
        <begin position="49"/>
        <end position="295"/>
    </location>
</feature>
<feature type="topological domain" description="Extracellular" evidence="2">
    <location>
        <begin position="49"/>
        <end position="102"/>
    </location>
</feature>
<feature type="transmembrane region" description="Helical" evidence="2">
    <location>
        <begin position="103"/>
        <end position="125"/>
    </location>
</feature>
<feature type="topological domain" description="Cytoplasmic" evidence="2">
    <location>
        <begin position="126"/>
        <end position="295"/>
    </location>
</feature>
<feature type="domain" description="Thioredoxin" evidence="3">
    <location>
        <begin position="114"/>
        <end position="269"/>
    </location>
</feature>
<feature type="region of interest" description="Disordered" evidence="4">
    <location>
        <begin position="266"/>
        <end position="295"/>
    </location>
</feature>
<feature type="short sequence motif" description="Di-lysine motif" evidence="5">
    <location>
        <begin position="292"/>
        <end position="295"/>
    </location>
</feature>
<feature type="modified residue" description="Phosphoserine" evidence="1">
    <location>
        <position position="211"/>
    </location>
</feature>
<feature type="modified residue" description="Phosphoserine" evidence="1">
    <location>
        <position position="243"/>
    </location>
</feature>
<name>TMX2_RAT</name>
<proteinExistence type="evidence at transcript level"/>